<comment type="function">
    <text evidence="1">Alpha toxins bind voltage-independently at site-3 of sodium channels (Nav) and inhibit the inactivation of the activated channels, thereby blocking neuronal transmission.</text>
</comment>
<comment type="subcellular location">
    <subcellularLocation>
        <location>Secreted</location>
    </subcellularLocation>
</comment>
<comment type="tissue specificity">
    <text>Expressed by the venom gland.</text>
</comment>
<comment type="domain">
    <text evidence="3">Has the structural arrangement of an alpha-helix connected to antiparallel beta-sheets by disulfide bonds (CS-alpha/beta).</text>
</comment>
<comment type="similarity">
    <text evidence="3">Belongs to the long (4 C-C) scorpion toxin superfamily. Sodium channel inhibitor family. Alpha subfamily.</text>
</comment>
<keyword id="KW-1015">Disulfide bond</keyword>
<keyword id="KW-0872">Ion channel impairing toxin</keyword>
<keyword id="KW-0528">Neurotoxin</keyword>
<keyword id="KW-0964">Secreted</keyword>
<keyword id="KW-0800">Toxin</keyword>
<keyword id="KW-0738">Voltage-gated sodium channel impairing toxin</keyword>
<evidence type="ECO:0000250" key="1"/>
<evidence type="ECO:0000255" key="2">
    <source>
        <dbReference type="PROSITE-ProRule" id="PRU01210"/>
    </source>
</evidence>
<evidence type="ECO:0000305" key="3"/>
<feature type="chain" id="PRO_0000066740" description="Toxin Boma6b">
    <location>
        <begin position="1"/>
        <end position="66"/>
    </location>
</feature>
<feature type="domain" description="LCN-type CS-alpha/beta" evidence="2">
    <location>
        <begin position="2"/>
        <end position="64"/>
    </location>
</feature>
<feature type="disulfide bond" evidence="2">
    <location>
        <begin position="12"/>
        <end position="63"/>
    </location>
</feature>
<feature type="disulfide bond" evidence="2">
    <location>
        <begin position="16"/>
        <end position="36"/>
    </location>
</feature>
<feature type="disulfide bond" evidence="2">
    <location>
        <begin position="22"/>
        <end position="46"/>
    </location>
</feature>
<feature type="disulfide bond" evidence="2">
    <location>
        <begin position="26"/>
        <end position="48"/>
    </location>
</feature>
<sequence length="66" mass="7465">VRDAYIAQNYNCVYDCARDAYCNELCTKNGAKSGHCEWFGPHGDACWCIDLPNNVPIKVEGKCHRK</sequence>
<accession>P60256</accession>
<proteinExistence type="inferred from homology"/>
<dbReference type="SMR" id="P60256"/>
<dbReference type="GO" id="GO:0005576">
    <property type="term" value="C:extracellular region"/>
    <property type="evidence" value="ECO:0007669"/>
    <property type="project" value="UniProtKB-SubCell"/>
</dbReference>
<dbReference type="GO" id="GO:0019871">
    <property type="term" value="F:sodium channel inhibitor activity"/>
    <property type="evidence" value="ECO:0007669"/>
    <property type="project" value="InterPro"/>
</dbReference>
<dbReference type="GO" id="GO:0090729">
    <property type="term" value="F:toxin activity"/>
    <property type="evidence" value="ECO:0007669"/>
    <property type="project" value="UniProtKB-KW"/>
</dbReference>
<dbReference type="GO" id="GO:0006952">
    <property type="term" value="P:defense response"/>
    <property type="evidence" value="ECO:0007669"/>
    <property type="project" value="InterPro"/>
</dbReference>
<dbReference type="CDD" id="cd23106">
    <property type="entry name" value="neurotoxins_LC_scorpion"/>
    <property type="match status" value="1"/>
</dbReference>
<dbReference type="FunFam" id="3.30.30.10:FF:000002">
    <property type="entry name" value="Alpha-like toxin BmK-M1"/>
    <property type="match status" value="1"/>
</dbReference>
<dbReference type="Gene3D" id="3.30.30.10">
    <property type="entry name" value="Knottin, scorpion toxin-like"/>
    <property type="match status" value="1"/>
</dbReference>
<dbReference type="InterPro" id="IPR044062">
    <property type="entry name" value="LCN-type_CS_alpha_beta_dom"/>
</dbReference>
<dbReference type="InterPro" id="IPR003614">
    <property type="entry name" value="Scorpion_toxin-like"/>
</dbReference>
<dbReference type="InterPro" id="IPR036574">
    <property type="entry name" value="Scorpion_toxin-like_sf"/>
</dbReference>
<dbReference type="InterPro" id="IPR018218">
    <property type="entry name" value="Scorpion_toxinL"/>
</dbReference>
<dbReference type="InterPro" id="IPR002061">
    <property type="entry name" value="Scorpion_toxinL/defensin"/>
</dbReference>
<dbReference type="Pfam" id="PF00537">
    <property type="entry name" value="Toxin_3"/>
    <property type="match status" value="1"/>
</dbReference>
<dbReference type="PRINTS" id="PR00285">
    <property type="entry name" value="SCORPNTOXIN"/>
</dbReference>
<dbReference type="SMART" id="SM00505">
    <property type="entry name" value="Knot1"/>
    <property type="match status" value="1"/>
</dbReference>
<dbReference type="SUPFAM" id="SSF57095">
    <property type="entry name" value="Scorpion toxin-like"/>
    <property type="match status" value="1"/>
</dbReference>
<dbReference type="PROSITE" id="PS51863">
    <property type="entry name" value="LCN_CSAB"/>
    <property type="match status" value="1"/>
</dbReference>
<protein>
    <recommendedName>
        <fullName>Toxin Boma6b</fullName>
    </recommendedName>
    <alternativeName>
        <fullName>Alpha-neurotoxin Bom alpha-6b</fullName>
    </alternativeName>
</protein>
<reference key="1">
    <citation type="journal article" date="1999" name="J. Mol. Evol.">
        <title>Dynamic diversification from a putative common ancestor of scorpion toxins affecting sodium, potassium, and chloride channels.</title>
        <authorList>
            <person name="Froy O."/>
            <person name="Sagiv T."/>
            <person name="Poreh M."/>
            <person name="Urbach D."/>
            <person name="Zilberberg N."/>
            <person name="Gurevitz M."/>
        </authorList>
    </citation>
    <scope>NUCLEOTIDE SEQUENCE [GENOMIC DNA]</scope>
    <source>
        <tissue>Single abdominal segment</tissue>
    </source>
</reference>
<name>SCXB_BUTOM</name>
<organism>
    <name type="scientific">Buthus occitanus mardochei</name>
    <name type="common">Moroccan scorpion</name>
    <name type="synonym">Buthus mardochei</name>
    <dbReference type="NCBI Taxonomy" id="6869"/>
    <lineage>
        <taxon>Eukaryota</taxon>
        <taxon>Metazoa</taxon>
        <taxon>Ecdysozoa</taxon>
        <taxon>Arthropoda</taxon>
        <taxon>Chelicerata</taxon>
        <taxon>Arachnida</taxon>
        <taxon>Scorpiones</taxon>
        <taxon>Buthida</taxon>
        <taxon>Buthoidea</taxon>
        <taxon>Buthidae</taxon>
        <taxon>Buthus</taxon>
    </lineage>
</organism>